<gene>
    <name evidence="1" type="primary">queC</name>
    <name type="ordered locus">YPTB0966</name>
</gene>
<evidence type="ECO:0000255" key="1">
    <source>
        <dbReference type="HAMAP-Rule" id="MF_01633"/>
    </source>
</evidence>
<reference key="1">
    <citation type="journal article" date="2004" name="Proc. Natl. Acad. Sci. U.S.A.">
        <title>Insights into the evolution of Yersinia pestis through whole-genome comparison with Yersinia pseudotuberculosis.</title>
        <authorList>
            <person name="Chain P.S.G."/>
            <person name="Carniel E."/>
            <person name="Larimer F.W."/>
            <person name="Lamerdin J."/>
            <person name="Stoutland P.O."/>
            <person name="Regala W.M."/>
            <person name="Georgescu A.M."/>
            <person name="Vergez L.M."/>
            <person name="Land M.L."/>
            <person name="Motin V.L."/>
            <person name="Brubaker R.R."/>
            <person name="Fowler J."/>
            <person name="Hinnebusch J."/>
            <person name="Marceau M."/>
            <person name="Medigue C."/>
            <person name="Simonet M."/>
            <person name="Chenal-Francisque V."/>
            <person name="Souza B."/>
            <person name="Dacheux D."/>
            <person name="Elliott J.M."/>
            <person name="Derbise A."/>
            <person name="Hauser L.J."/>
            <person name="Garcia E."/>
        </authorList>
    </citation>
    <scope>NUCLEOTIDE SEQUENCE [LARGE SCALE GENOMIC DNA]</scope>
    <source>
        <strain>IP32953</strain>
    </source>
</reference>
<organism>
    <name type="scientific">Yersinia pseudotuberculosis serotype I (strain IP32953)</name>
    <dbReference type="NCBI Taxonomy" id="273123"/>
    <lineage>
        <taxon>Bacteria</taxon>
        <taxon>Pseudomonadati</taxon>
        <taxon>Pseudomonadota</taxon>
        <taxon>Gammaproteobacteria</taxon>
        <taxon>Enterobacterales</taxon>
        <taxon>Yersiniaceae</taxon>
        <taxon>Yersinia</taxon>
    </lineage>
</organism>
<comment type="function">
    <text evidence="1">Catalyzes the ATP-dependent conversion of 7-carboxy-7-deazaguanine (CDG) to 7-cyano-7-deazaguanine (preQ(0)).</text>
</comment>
<comment type="catalytic activity">
    <reaction evidence="1">
        <text>7-carboxy-7-deazaguanine + NH4(+) + ATP = 7-cyano-7-deazaguanine + ADP + phosphate + H2O + H(+)</text>
        <dbReference type="Rhea" id="RHEA:27982"/>
        <dbReference type="ChEBI" id="CHEBI:15377"/>
        <dbReference type="ChEBI" id="CHEBI:15378"/>
        <dbReference type="ChEBI" id="CHEBI:28938"/>
        <dbReference type="ChEBI" id="CHEBI:30616"/>
        <dbReference type="ChEBI" id="CHEBI:43474"/>
        <dbReference type="ChEBI" id="CHEBI:45075"/>
        <dbReference type="ChEBI" id="CHEBI:61036"/>
        <dbReference type="ChEBI" id="CHEBI:456216"/>
        <dbReference type="EC" id="6.3.4.20"/>
    </reaction>
</comment>
<comment type="cofactor">
    <cofactor evidence="1">
        <name>Zn(2+)</name>
        <dbReference type="ChEBI" id="CHEBI:29105"/>
    </cofactor>
    <text evidence="1">Binds 1 zinc ion per subunit.</text>
</comment>
<comment type="pathway">
    <text evidence="1">Purine metabolism; 7-cyano-7-deazaguanine biosynthesis.</text>
</comment>
<comment type="similarity">
    <text evidence="1">Belongs to the QueC family.</text>
</comment>
<proteinExistence type="inferred from homology"/>
<name>QUEC_YERPS</name>
<keyword id="KW-0067">ATP-binding</keyword>
<keyword id="KW-0436">Ligase</keyword>
<keyword id="KW-0479">Metal-binding</keyword>
<keyword id="KW-0547">Nucleotide-binding</keyword>
<keyword id="KW-0671">Queuosine biosynthesis</keyword>
<keyword id="KW-0862">Zinc</keyword>
<sequence>MKRAVVVFSGGQDSTTCLIQALQQYDEVHCITFDYGQRHRTEIDVARELALQLGATAHKVLDVGMLNELAVSSLTRDSIPVPSYDANADGALPSTFVPGRNILFLTLASIYAYQVQAQAVITGVCETDFSGYPDCRDEFIKALNHAIDLGIGRDIAFITPLMWLDKAETWALADYYQQLDLIRHHTLTCYNGIKGDGCGQCAACHLRAKGLASYMANKQQVILNLKQKVGLA</sequence>
<dbReference type="EC" id="6.3.4.20" evidence="1"/>
<dbReference type="EMBL" id="BX936398">
    <property type="protein sequence ID" value="CAH20206.1"/>
    <property type="molecule type" value="Genomic_DNA"/>
</dbReference>
<dbReference type="RefSeq" id="WP_002208635.1">
    <property type="nucleotide sequence ID" value="NZ_CP009712.1"/>
</dbReference>
<dbReference type="SMR" id="Q66DS7"/>
<dbReference type="GeneID" id="57975561"/>
<dbReference type="KEGG" id="ypo:BZ17_1581"/>
<dbReference type="KEGG" id="yps:YPTB0966"/>
<dbReference type="PATRIC" id="fig|273123.14.peg.1678"/>
<dbReference type="UniPathway" id="UPA00391"/>
<dbReference type="Proteomes" id="UP000001011">
    <property type="component" value="Chromosome"/>
</dbReference>
<dbReference type="GO" id="GO:0005524">
    <property type="term" value="F:ATP binding"/>
    <property type="evidence" value="ECO:0007669"/>
    <property type="project" value="UniProtKB-UniRule"/>
</dbReference>
<dbReference type="GO" id="GO:0016879">
    <property type="term" value="F:ligase activity, forming carbon-nitrogen bonds"/>
    <property type="evidence" value="ECO:0007669"/>
    <property type="project" value="UniProtKB-UniRule"/>
</dbReference>
<dbReference type="GO" id="GO:0008270">
    <property type="term" value="F:zinc ion binding"/>
    <property type="evidence" value="ECO:0007669"/>
    <property type="project" value="UniProtKB-UniRule"/>
</dbReference>
<dbReference type="GO" id="GO:0008616">
    <property type="term" value="P:queuosine biosynthetic process"/>
    <property type="evidence" value="ECO:0007669"/>
    <property type="project" value="UniProtKB-UniRule"/>
</dbReference>
<dbReference type="CDD" id="cd01995">
    <property type="entry name" value="QueC-like"/>
    <property type="match status" value="1"/>
</dbReference>
<dbReference type="FunFam" id="3.40.50.620:FF:000017">
    <property type="entry name" value="7-cyano-7-deazaguanine synthase"/>
    <property type="match status" value="1"/>
</dbReference>
<dbReference type="Gene3D" id="3.40.50.620">
    <property type="entry name" value="HUPs"/>
    <property type="match status" value="1"/>
</dbReference>
<dbReference type="HAMAP" id="MF_01633">
    <property type="entry name" value="QueC"/>
    <property type="match status" value="1"/>
</dbReference>
<dbReference type="InterPro" id="IPR018317">
    <property type="entry name" value="QueC"/>
</dbReference>
<dbReference type="InterPro" id="IPR014729">
    <property type="entry name" value="Rossmann-like_a/b/a_fold"/>
</dbReference>
<dbReference type="NCBIfam" id="TIGR00364">
    <property type="entry name" value="7-cyano-7-deazaguanine synthase QueC"/>
    <property type="match status" value="1"/>
</dbReference>
<dbReference type="NCBIfam" id="NF008317">
    <property type="entry name" value="PRK11106.1"/>
    <property type="match status" value="1"/>
</dbReference>
<dbReference type="PANTHER" id="PTHR42914">
    <property type="entry name" value="7-CYANO-7-DEAZAGUANINE SYNTHASE"/>
    <property type="match status" value="1"/>
</dbReference>
<dbReference type="PANTHER" id="PTHR42914:SF1">
    <property type="entry name" value="7-CYANO-7-DEAZAGUANINE SYNTHASE"/>
    <property type="match status" value="1"/>
</dbReference>
<dbReference type="Pfam" id="PF06508">
    <property type="entry name" value="QueC"/>
    <property type="match status" value="1"/>
</dbReference>
<dbReference type="PIRSF" id="PIRSF006293">
    <property type="entry name" value="ExsB"/>
    <property type="match status" value="1"/>
</dbReference>
<dbReference type="SUPFAM" id="SSF52402">
    <property type="entry name" value="Adenine nucleotide alpha hydrolases-like"/>
    <property type="match status" value="1"/>
</dbReference>
<protein>
    <recommendedName>
        <fullName evidence="1">7-cyano-7-deazaguanine synthase</fullName>
        <ecNumber evidence="1">6.3.4.20</ecNumber>
    </recommendedName>
    <alternativeName>
        <fullName evidence="1">7-cyano-7-carbaguanine synthase</fullName>
    </alternativeName>
    <alternativeName>
        <fullName evidence="1">PreQ(0) synthase</fullName>
    </alternativeName>
    <alternativeName>
        <fullName evidence="1">Queuosine biosynthesis protein QueC</fullName>
    </alternativeName>
</protein>
<feature type="chain" id="PRO_0000246970" description="7-cyano-7-deazaguanine synthase">
    <location>
        <begin position="1"/>
        <end position="232"/>
    </location>
</feature>
<feature type="binding site" evidence="1">
    <location>
        <begin position="8"/>
        <end position="18"/>
    </location>
    <ligand>
        <name>ATP</name>
        <dbReference type="ChEBI" id="CHEBI:30616"/>
    </ligand>
</feature>
<feature type="binding site" evidence="1">
    <location>
        <position position="189"/>
    </location>
    <ligand>
        <name>Zn(2+)</name>
        <dbReference type="ChEBI" id="CHEBI:29105"/>
    </ligand>
</feature>
<feature type="binding site" evidence="1">
    <location>
        <position position="198"/>
    </location>
    <ligand>
        <name>Zn(2+)</name>
        <dbReference type="ChEBI" id="CHEBI:29105"/>
    </ligand>
</feature>
<feature type="binding site" evidence="1">
    <location>
        <position position="201"/>
    </location>
    <ligand>
        <name>Zn(2+)</name>
        <dbReference type="ChEBI" id="CHEBI:29105"/>
    </ligand>
</feature>
<feature type="binding site" evidence="1">
    <location>
        <position position="204"/>
    </location>
    <ligand>
        <name>Zn(2+)</name>
        <dbReference type="ChEBI" id="CHEBI:29105"/>
    </ligand>
</feature>
<accession>Q66DS7</accession>